<feature type="chain" id="PRO_0000270565" description="Zinc finger protein STP3">
    <location>
        <begin position="1"/>
        <end position="343"/>
    </location>
</feature>
<feature type="zinc finger region" description="C2H2-type" evidence="1">
    <location>
        <begin position="169"/>
        <end position="191"/>
    </location>
</feature>
<feature type="region of interest" description="Disordered" evidence="2">
    <location>
        <begin position="31"/>
        <end position="56"/>
    </location>
</feature>
<feature type="region of interest" description="Disordered" evidence="2">
    <location>
        <begin position="71"/>
        <end position="140"/>
    </location>
</feature>
<feature type="region of interest" description="Disordered" evidence="2">
    <location>
        <begin position="198"/>
        <end position="222"/>
    </location>
</feature>
<feature type="compositionally biased region" description="Polar residues" evidence="2">
    <location>
        <begin position="33"/>
        <end position="45"/>
    </location>
</feature>
<feature type="compositionally biased region" description="Low complexity" evidence="2">
    <location>
        <begin position="46"/>
        <end position="56"/>
    </location>
</feature>
<feature type="compositionally biased region" description="Low complexity" evidence="2">
    <location>
        <begin position="71"/>
        <end position="86"/>
    </location>
</feature>
<feature type="compositionally biased region" description="Low complexity" evidence="2">
    <location>
        <begin position="94"/>
        <end position="120"/>
    </location>
</feature>
<feature type="modified residue" description="Phosphoserine" evidence="6">
    <location>
        <position position="71"/>
    </location>
</feature>
<feature type="modified residue" description="Phosphoserine" evidence="5">
    <location>
        <position position="111"/>
    </location>
</feature>
<evidence type="ECO:0000255" key="1">
    <source>
        <dbReference type="PROSITE-ProRule" id="PRU00042"/>
    </source>
</evidence>
<evidence type="ECO:0000256" key="2">
    <source>
        <dbReference type="SAM" id="MobiDB-lite"/>
    </source>
</evidence>
<evidence type="ECO:0000269" key="3">
    <source>
    </source>
</evidence>
<evidence type="ECO:0000269" key="4">
    <source>
    </source>
</evidence>
<evidence type="ECO:0007744" key="5">
    <source>
    </source>
</evidence>
<evidence type="ECO:0007744" key="6">
    <source>
    </source>
</evidence>
<keyword id="KW-0479">Metal-binding</keyword>
<keyword id="KW-0539">Nucleus</keyword>
<keyword id="KW-0597">Phosphoprotein</keyword>
<keyword id="KW-1185">Reference proteome</keyword>
<keyword id="KW-0862">Zinc</keyword>
<keyword id="KW-0863">Zinc-finger</keyword>
<proteinExistence type="evidence at protein level"/>
<organism>
    <name type="scientific">Saccharomyces cerevisiae (strain ATCC 204508 / S288c)</name>
    <name type="common">Baker's yeast</name>
    <dbReference type="NCBI Taxonomy" id="559292"/>
    <lineage>
        <taxon>Eukaryota</taxon>
        <taxon>Fungi</taxon>
        <taxon>Dikarya</taxon>
        <taxon>Ascomycota</taxon>
        <taxon>Saccharomycotina</taxon>
        <taxon>Saccharomycetes</taxon>
        <taxon>Saccharomycetales</taxon>
        <taxon>Saccharomycetaceae</taxon>
        <taxon>Saccharomyces</taxon>
    </lineage>
</organism>
<reference key="1">
    <citation type="journal article" date="1997" name="Nature">
        <title>The nucleotide sequence of Saccharomyces cerevisiae chromosome XII.</title>
        <authorList>
            <person name="Johnston M."/>
            <person name="Hillier L.W."/>
            <person name="Riles L."/>
            <person name="Albermann K."/>
            <person name="Andre B."/>
            <person name="Ansorge W."/>
            <person name="Benes V."/>
            <person name="Brueckner M."/>
            <person name="Delius H."/>
            <person name="Dubois E."/>
            <person name="Duesterhoeft A."/>
            <person name="Entian K.-D."/>
            <person name="Floeth M."/>
            <person name="Goffeau A."/>
            <person name="Hebling U."/>
            <person name="Heumann K."/>
            <person name="Heuss-Neitzel D."/>
            <person name="Hilbert H."/>
            <person name="Hilger F."/>
            <person name="Kleine K."/>
            <person name="Koetter P."/>
            <person name="Louis E.J."/>
            <person name="Messenguy F."/>
            <person name="Mewes H.-W."/>
            <person name="Miosga T."/>
            <person name="Moestl D."/>
            <person name="Mueller-Auer S."/>
            <person name="Nentwich U."/>
            <person name="Obermaier B."/>
            <person name="Piravandi E."/>
            <person name="Pohl T.M."/>
            <person name="Portetelle D."/>
            <person name="Purnelle B."/>
            <person name="Rechmann S."/>
            <person name="Rieger M."/>
            <person name="Rinke M."/>
            <person name="Rose M."/>
            <person name="Scharfe M."/>
            <person name="Scherens B."/>
            <person name="Scholler P."/>
            <person name="Schwager C."/>
            <person name="Schwarz S."/>
            <person name="Underwood A.P."/>
            <person name="Urrestarazu L.A."/>
            <person name="Vandenbol M."/>
            <person name="Verhasselt P."/>
            <person name="Vierendeels F."/>
            <person name="Voet M."/>
            <person name="Volckaert G."/>
            <person name="Voss H."/>
            <person name="Wambutt R."/>
            <person name="Wedler E."/>
            <person name="Wedler H."/>
            <person name="Zimmermann F.K."/>
            <person name="Zollner A."/>
            <person name="Hani J."/>
            <person name="Hoheisel J.D."/>
        </authorList>
    </citation>
    <scope>NUCLEOTIDE SEQUENCE [LARGE SCALE GENOMIC DNA]</scope>
    <source>
        <strain>ATCC 204508 / S288c</strain>
    </source>
</reference>
<reference key="2">
    <citation type="journal article" date="2014" name="G3 (Bethesda)">
        <title>The reference genome sequence of Saccharomyces cerevisiae: Then and now.</title>
        <authorList>
            <person name="Engel S.R."/>
            <person name="Dietrich F.S."/>
            <person name="Fisk D.G."/>
            <person name="Binkley G."/>
            <person name="Balakrishnan R."/>
            <person name="Costanzo M.C."/>
            <person name="Dwight S.S."/>
            <person name="Hitz B.C."/>
            <person name="Karra K."/>
            <person name="Nash R.S."/>
            <person name="Weng S."/>
            <person name="Wong E.D."/>
            <person name="Lloyd P."/>
            <person name="Skrzypek M.S."/>
            <person name="Miyasato S.R."/>
            <person name="Simison M."/>
            <person name="Cherry J.M."/>
        </authorList>
    </citation>
    <scope>GENOME REANNOTATION</scope>
    <source>
        <strain>ATCC 204508 / S288c</strain>
    </source>
</reference>
<reference key="3">
    <citation type="journal article" date="2003" name="Nature">
        <title>Global analysis of protein localization in budding yeast.</title>
        <authorList>
            <person name="Huh W.-K."/>
            <person name="Falvo J.V."/>
            <person name="Gerke L.C."/>
            <person name="Carroll A.S."/>
            <person name="Howson R.W."/>
            <person name="Weissman J.S."/>
            <person name="O'Shea E.K."/>
        </authorList>
    </citation>
    <scope>SUBCELLULAR LOCATION [LARGE SCALE ANALYSIS]</scope>
</reference>
<reference key="4">
    <citation type="journal article" date="2003" name="Nature">
        <title>Global analysis of protein expression in yeast.</title>
        <authorList>
            <person name="Ghaemmaghami S."/>
            <person name="Huh W.-K."/>
            <person name="Bower K."/>
            <person name="Howson R.W."/>
            <person name="Belle A."/>
            <person name="Dephoure N."/>
            <person name="O'Shea E.K."/>
            <person name="Weissman J.S."/>
        </authorList>
    </citation>
    <scope>LEVEL OF PROTEIN EXPRESSION [LARGE SCALE ANALYSIS]</scope>
</reference>
<reference key="5">
    <citation type="journal article" date="2005" name="Mol. Cell. Proteomics">
        <title>Quantitative phosphoproteomics applied to the yeast pheromone signaling pathway.</title>
        <authorList>
            <person name="Gruhler A."/>
            <person name="Olsen J.V."/>
            <person name="Mohammed S."/>
            <person name="Mortensen P."/>
            <person name="Faergeman N.J."/>
            <person name="Mann M."/>
            <person name="Jensen O.N."/>
        </authorList>
    </citation>
    <scope>PHOSPHORYLATION [LARGE SCALE ANALYSIS] AT SER-111</scope>
    <scope>IDENTIFICATION BY MASS SPECTROMETRY [LARGE SCALE ANALYSIS]</scope>
    <source>
        <strain>YAL6B</strain>
    </source>
</reference>
<reference key="6">
    <citation type="journal article" date="2008" name="Mol. Cell. Proteomics">
        <title>A multidimensional chromatography technology for in-depth phosphoproteome analysis.</title>
        <authorList>
            <person name="Albuquerque C.P."/>
            <person name="Smolka M.B."/>
            <person name="Payne S.H."/>
            <person name="Bafna V."/>
            <person name="Eng J."/>
            <person name="Zhou H."/>
        </authorList>
    </citation>
    <scope>PHOSPHORYLATION [LARGE SCALE ANALYSIS] AT SER-71</scope>
    <scope>IDENTIFICATION BY MASS SPECTROMETRY [LARGE SCALE ANALYSIS]</scope>
</reference>
<comment type="subcellular location">
    <subcellularLocation>
        <location evidence="3">Nucleus</location>
    </subcellularLocation>
</comment>
<comment type="miscellaneous">
    <text evidence="4">Present with 1240 molecules/cell in log phase SD medium.</text>
</comment>
<protein>
    <recommendedName>
        <fullName>Zinc finger protein STP3</fullName>
    </recommendedName>
</protein>
<name>STP3_YEAST</name>
<accession>Q05937</accession>
<accession>D6VZ11</accession>
<sequence>MSNANNSAMNHITLPPISSFDNLIKAAERQYNGEASSASTHPTLPNMNISNGSGSAGASSSMLSYQLLPHSNDVSRSNSSSSFLPSVQQPTEGSASASETSSSASPSRSISPILKVAGPSSVGGAGVSTPHSTKINKPRKKKQCPICRNFYANLTTHKATHLTPEDRPHKCPICHRGFARNNDLLRHKKRHWKDEILSQSGVLSNHNDGKGGSVSPNDDDTHEKMTPMNSVTDYAQLKSLHQIKGTFKCPFNSTLIQLDMDMYPYKLKPLNFETSNCHQTGVFSRCDTFKNHLKALHFEYPPGTKKKDRNVVPGRCKHCGLKFENVDVWLNEHVGKQCGYKYH</sequence>
<gene>
    <name type="primary">STP3</name>
    <name type="ordered locus">YLR375W</name>
</gene>
<dbReference type="EMBL" id="U19103">
    <property type="protein sequence ID" value="AAB67562.1"/>
    <property type="molecule type" value="Genomic_DNA"/>
</dbReference>
<dbReference type="EMBL" id="BK006945">
    <property type="protein sequence ID" value="DAA09677.1"/>
    <property type="molecule type" value="Genomic_DNA"/>
</dbReference>
<dbReference type="PIR" id="S51392">
    <property type="entry name" value="S51392"/>
</dbReference>
<dbReference type="RefSeq" id="NP_013479.3">
    <property type="nucleotide sequence ID" value="NM_001182264.3"/>
</dbReference>
<dbReference type="BioGRID" id="31634">
    <property type="interactions" value="54"/>
</dbReference>
<dbReference type="FunCoup" id="Q05937">
    <property type="interactions" value="73"/>
</dbReference>
<dbReference type="IntAct" id="Q05937">
    <property type="interactions" value="1"/>
</dbReference>
<dbReference type="MINT" id="Q05937"/>
<dbReference type="STRING" id="4932.YLR375W"/>
<dbReference type="iPTMnet" id="Q05937"/>
<dbReference type="PaxDb" id="4932-YLR375W"/>
<dbReference type="PeptideAtlas" id="Q05937"/>
<dbReference type="EnsemblFungi" id="YLR375W_mRNA">
    <property type="protein sequence ID" value="YLR375W"/>
    <property type="gene ID" value="YLR375W"/>
</dbReference>
<dbReference type="GeneID" id="851089"/>
<dbReference type="KEGG" id="sce:YLR375W"/>
<dbReference type="AGR" id="SGD:S000004367"/>
<dbReference type="SGD" id="S000004367">
    <property type="gene designation" value="STP3"/>
</dbReference>
<dbReference type="VEuPathDB" id="FungiDB:YLR375W"/>
<dbReference type="eggNOG" id="KOG1721">
    <property type="taxonomic scope" value="Eukaryota"/>
</dbReference>
<dbReference type="GeneTree" id="ENSGT00940000176480"/>
<dbReference type="HOGENOM" id="CLU_035625_0_1_1"/>
<dbReference type="InParanoid" id="Q05937"/>
<dbReference type="OMA" id="TSNCHIT"/>
<dbReference type="OrthoDB" id="10018191at2759"/>
<dbReference type="BioCyc" id="YEAST:G3O-32443-MONOMER"/>
<dbReference type="BioGRID-ORCS" id="851089">
    <property type="hits" value="1 hit in 13 CRISPR screens"/>
</dbReference>
<dbReference type="PRO" id="PR:Q05937"/>
<dbReference type="Proteomes" id="UP000002311">
    <property type="component" value="Chromosome XII"/>
</dbReference>
<dbReference type="RNAct" id="Q05937">
    <property type="molecule type" value="protein"/>
</dbReference>
<dbReference type="GO" id="GO:0005634">
    <property type="term" value="C:nucleus"/>
    <property type="evidence" value="ECO:0007005"/>
    <property type="project" value="SGD"/>
</dbReference>
<dbReference type="GO" id="GO:0043565">
    <property type="term" value="F:sequence-specific DNA binding"/>
    <property type="evidence" value="ECO:0000314"/>
    <property type="project" value="SGD"/>
</dbReference>
<dbReference type="GO" id="GO:0008270">
    <property type="term" value="F:zinc ion binding"/>
    <property type="evidence" value="ECO:0007669"/>
    <property type="project" value="UniProtKB-KW"/>
</dbReference>
<dbReference type="FunFam" id="3.30.160.60:FF:001951">
    <property type="entry name" value="Stp4p"/>
    <property type="match status" value="1"/>
</dbReference>
<dbReference type="Gene3D" id="3.30.160.60">
    <property type="entry name" value="Classic Zinc Finger"/>
    <property type="match status" value="1"/>
</dbReference>
<dbReference type="InterPro" id="IPR051643">
    <property type="entry name" value="Transcr_Reg_ZincFinger"/>
</dbReference>
<dbReference type="InterPro" id="IPR036236">
    <property type="entry name" value="Znf_C2H2_sf"/>
</dbReference>
<dbReference type="InterPro" id="IPR013087">
    <property type="entry name" value="Znf_C2H2_type"/>
</dbReference>
<dbReference type="PANTHER" id="PTHR24396:SF19">
    <property type="entry name" value="FI01119P"/>
    <property type="match status" value="1"/>
</dbReference>
<dbReference type="PANTHER" id="PTHR24396">
    <property type="entry name" value="ZINC FINGER PROTEIN"/>
    <property type="match status" value="1"/>
</dbReference>
<dbReference type="Pfam" id="PF13894">
    <property type="entry name" value="zf-C2H2_4"/>
    <property type="match status" value="1"/>
</dbReference>
<dbReference type="SMART" id="SM00355">
    <property type="entry name" value="ZnF_C2H2"/>
    <property type="match status" value="2"/>
</dbReference>
<dbReference type="SUPFAM" id="SSF57667">
    <property type="entry name" value="beta-beta-alpha zinc fingers"/>
    <property type="match status" value="1"/>
</dbReference>
<dbReference type="PROSITE" id="PS00028">
    <property type="entry name" value="ZINC_FINGER_C2H2_1"/>
    <property type="match status" value="1"/>
</dbReference>
<dbReference type="PROSITE" id="PS50157">
    <property type="entry name" value="ZINC_FINGER_C2H2_2"/>
    <property type="match status" value="1"/>
</dbReference>